<protein>
    <recommendedName>
        <fullName>Nucleoprotein</fullName>
        <shortName>NP</shortName>
    </recommendedName>
    <alternativeName>
        <fullName>Nucleocapsid protein</fullName>
        <shortName>Protein N</shortName>
    </alternativeName>
</protein>
<reference key="1">
    <citation type="journal article" date="1990" name="J. Gen. Virol.">
        <title>Cloning and sequencing the messenger RNA of the N gene of viral haemorrhagic septicaemia virus.</title>
        <authorList>
            <person name="Bernard J."/>
            <person name="Lecocq-Xhonneux F."/>
            <person name="Rossius M."/>
            <person name="Thiry M.E."/>
            <person name="de Kinkelin P."/>
        </authorList>
    </citation>
    <scope>NUCLEOTIDE SEQUENCE [MRNA]</scope>
</reference>
<feature type="chain" id="PRO_0000222813" description="Nucleoprotein">
    <location>
        <begin position="1"/>
        <end position="404"/>
    </location>
</feature>
<feature type="region of interest" description="Disordered" evidence="2">
    <location>
        <begin position="358"/>
        <end position="404"/>
    </location>
</feature>
<feature type="compositionally biased region" description="Acidic residues" evidence="2">
    <location>
        <begin position="391"/>
        <end position="404"/>
    </location>
</feature>
<organismHost>
    <name type="scientific">Coregonus lavaretus</name>
    <name type="common">Common whitefish</name>
    <name type="synonym">Salmo lavaretus</name>
    <dbReference type="NCBI Taxonomy" id="59291"/>
</organismHost>
<organismHost>
    <name type="scientific">Esox lucius</name>
    <name type="common">Northern pike</name>
    <dbReference type="NCBI Taxonomy" id="8010"/>
</organismHost>
<organismHost>
    <name type="scientific">Oncorhynchus kisutch</name>
    <name type="common">Coho salmon</name>
    <name type="synonym">Salmo kisutch</name>
    <dbReference type="NCBI Taxonomy" id="8019"/>
</organismHost>
<organismHost>
    <name type="scientific">Oncorhynchus mykiss</name>
    <name type="common">Rainbow trout</name>
    <name type="synonym">Salmo gairdneri</name>
    <dbReference type="NCBI Taxonomy" id="8022"/>
</organismHost>
<organismHost>
    <name type="scientific">Oncorhynchus tshawytscha</name>
    <name type="common">Chinook salmon</name>
    <name type="synonym">Salmo tshawytscha</name>
    <dbReference type="NCBI Taxonomy" id="74940"/>
</organismHost>
<organismHost>
    <name type="scientific">Salmo trutta</name>
    <name type="common">Brown trout</name>
    <dbReference type="NCBI Taxonomy" id="8032"/>
</organismHost>
<organismHost>
    <name type="scientific">Salvelinus namaycush</name>
    <name type="common">Lake trout</name>
    <name type="synonym">Salmo namaycush</name>
    <dbReference type="NCBI Taxonomy" id="8040"/>
</organismHost>
<organismHost>
    <name type="scientific">Thymallus thymallus</name>
    <name type="common">Grayling</name>
    <name type="synonym">Salmo thymallus</name>
    <dbReference type="NCBI Taxonomy" id="36185"/>
</organismHost>
<evidence type="ECO:0000250" key="1"/>
<evidence type="ECO:0000256" key="2">
    <source>
        <dbReference type="SAM" id="MobiDB-lite"/>
    </source>
</evidence>
<evidence type="ECO:0000305" key="3"/>
<gene>
    <name type="primary">N</name>
</gene>
<proteinExistence type="evidence at transcript level"/>
<comment type="function">
    <text evidence="1">Encapsidates the genome, protecting it from nucleases. If expressed without protein P it binds non-specifically RNA and therefore can bind it's own mRNA. Interaction with protein P abolishes any non-specific RNA binding, and prevents phosphorylation. The soluble N-P complex encapsidates specifically the genomic RNA, with protein N protecting the genome like a pearl necklace. The encapsidated genomic RNA is termed the nucleocapsid (NC) and serves as template for viral transcription and replication. Protein N binds protein P in the NC through a different interaction, and can be phosphorylated. Subsequent viral replication is dependent on intracellular concentration of newly synthesized protein N. During replication, encapsidation by protein N is coupled to RNA synthesis and all replicative products are resistant to nucleases (By similarity).</text>
</comment>
<comment type="subunit">
    <text evidence="1">Homomultimerizes to form the nucleocapsid. Binds to viral genomic RNA (By similarity).</text>
</comment>
<comment type="subcellular location">
    <subcellularLocation>
        <location>Virion</location>
    </subcellularLocation>
    <subcellularLocation>
        <location evidence="1">Host cytoplasm</location>
    </subcellularLocation>
</comment>
<comment type="similarity">
    <text evidence="3">Belongs to the novirhabdovirus nucleocapsid protein family.</text>
</comment>
<sequence>MEGGIRAAFSGLNDVRIDPTGGEGRVLVPGEVELIVYVGEFGEEDRKVIVDALSALGGPQTVQALSVLLSYVLQGNTQEDLETKCKVLTDMGFKVTQAVRATSIEAGIMMPMRELALTVNDDNLMEIVKGTLMTCSLLTKYSVDKMIKYITKKLGELADTQGVGELQHFTADKAAIRKLAGCVRPGQKITKALYAFILTEIADPTTQSRVPSMGALRLNGTGMTMIGLFTQAANNLGIAPAKLLEDLCMESLVESARRIIQLMRQVSEAKSIQERYAIMMSRMLGESYYKSYGLNDNSKISYILSQISGKYAVDSLEGLEGIKVTEKFREFAELVAEVLVDKYERIGEDSTEVSDVIREAARQHARRTSAKPEPKARNFRSSTGRGREQETGESDDDDYPEDSD</sequence>
<organism>
    <name type="scientific">Viral hemorrhagic septicemia virus (strain 07-71)</name>
    <name type="common">VHSV</name>
    <dbReference type="NCBI Taxonomy" id="11288"/>
    <lineage>
        <taxon>Viruses</taxon>
        <taxon>Riboviria</taxon>
        <taxon>Orthornavirae</taxon>
        <taxon>Negarnaviricota</taxon>
        <taxon>Haploviricotina</taxon>
        <taxon>Monjiviricetes</taxon>
        <taxon>Mononegavirales</taxon>
        <taxon>Rhabdoviridae</taxon>
        <taxon>Gammarhabdovirinae</taxon>
        <taxon>Novirhabdovirus</taxon>
        <taxon>Novirhabdovirus piscine</taxon>
    </lineage>
</organism>
<dbReference type="EMBL" id="D00687">
    <property type="protein sequence ID" value="BAA00591.1"/>
    <property type="molecule type" value="mRNA"/>
</dbReference>
<dbReference type="PIR" id="A36651">
    <property type="entry name" value="VHVNHS"/>
</dbReference>
<dbReference type="GO" id="GO:0019029">
    <property type="term" value="C:helical viral capsid"/>
    <property type="evidence" value="ECO:0007669"/>
    <property type="project" value="UniProtKB-KW"/>
</dbReference>
<dbReference type="GO" id="GO:0030430">
    <property type="term" value="C:host cell cytoplasm"/>
    <property type="evidence" value="ECO:0007669"/>
    <property type="project" value="UniProtKB-SubCell"/>
</dbReference>
<dbReference type="GO" id="GO:1990904">
    <property type="term" value="C:ribonucleoprotein complex"/>
    <property type="evidence" value="ECO:0007669"/>
    <property type="project" value="UniProtKB-KW"/>
</dbReference>
<dbReference type="GO" id="GO:0019013">
    <property type="term" value="C:viral nucleocapsid"/>
    <property type="evidence" value="ECO:0007669"/>
    <property type="project" value="UniProtKB-KW"/>
</dbReference>
<dbReference type="GO" id="GO:0003723">
    <property type="term" value="F:RNA binding"/>
    <property type="evidence" value="ECO:0007669"/>
    <property type="project" value="UniProtKB-KW"/>
</dbReference>
<dbReference type="InterPro" id="IPR004902">
    <property type="entry name" value="Rhabdo_ncap_2"/>
</dbReference>
<dbReference type="Pfam" id="PF03216">
    <property type="entry name" value="Rhabdo_ncap_2"/>
    <property type="match status" value="1"/>
</dbReference>
<name>NCAP_VHSV0</name>
<accession>P24378</accession>
<keyword id="KW-0167">Capsid protein</keyword>
<keyword id="KW-1139">Helical capsid protein</keyword>
<keyword id="KW-1035">Host cytoplasm</keyword>
<keyword id="KW-0597">Phosphoprotein</keyword>
<keyword id="KW-0687">Ribonucleoprotein</keyword>
<keyword id="KW-0694">RNA-binding</keyword>
<keyword id="KW-0543">Viral nucleoprotein</keyword>
<keyword id="KW-0946">Virion</keyword>